<dbReference type="EMBL" id="CP000962">
    <property type="protein sequence ID" value="ACA56372.1"/>
    <property type="molecule type" value="Genomic_DNA"/>
</dbReference>
<dbReference type="RefSeq" id="WP_003357299.1">
    <property type="nucleotide sequence ID" value="NC_010520.1"/>
</dbReference>
<dbReference type="SMR" id="B1KSM2"/>
<dbReference type="GeneID" id="5187734"/>
<dbReference type="KEGG" id="cbl:CLK_2921"/>
<dbReference type="HOGENOM" id="CLU_036235_2_1_9"/>
<dbReference type="GO" id="GO:0015934">
    <property type="term" value="C:large ribosomal subunit"/>
    <property type="evidence" value="ECO:0007669"/>
    <property type="project" value="InterPro"/>
</dbReference>
<dbReference type="GO" id="GO:0019843">
    <property type="term" value="F:rRNA binding"/>
    <property type="evidence" value="ECO:0007669"/>
    <property type="project" value="UniProtKB-UniRule"/>
</dbReference>
<dbReference type="GO" id="GO:0003735">
    <property type="term" value="F:structural constituent of ribosome"/>
    <property type="evidence" value="ECO:0007669"/>
    <property type="project" value="InterPro"/>
</dbReference>
<dbReference type="GO" id="GO:0016740">
    <property type="term" value="F:transferase activity"/>
    <property type="evidence" value="ECO:0007669"/>
    <property type="project" value="InterPro"/>
</dbReference>
<dbReference type="GO" id="GO:0002181">
    <property type="term" value="P:cytoplasmic translation"/>
    <property type="evidence" value="ECO:0007669"/>
    <property type="project" value="TreeGrafter"/>
</dbReference>
<dbReference type="FunFam" id="2.30.30.30:FF:000001">
    <property type="entry name" value="50S ribosomal protein L2"/>
    <property type="match status" value="1"/>
</dbReference>
<dbReference type="FunFam" id="2.40.50.140:FF:000003">
    <property type="entry name" value="50S ribosomal protein L2"/>
    <property type="match status" value="1"/>
</dbReference>
<dbReference type="FunFam" id="4.10.950.10:FF:000001">
    <property type="entry name" value="50S ribosomal protein L2"/>
    <property type="match status" value="1"/>
</dbReference>
<dbReference type="Gene3D" id="2.30.30.30">
    <property type="match status" value="1"/>
</dbReference>
<dbReference type="Gene3D" id="2.40.50.140">
    <property type="entry name" value="Nucleic acid-binding proteins"/>
    <property type="match status" value="1"/>
</dbReference>
<dbReference type="Gene3D" id="4.10.950.10">
    <property type="entry name" value="Ribosomal protein L2, domain 3"/>
    <property type="match status" value="1"/>
</dbReference>
<dbReference type="HAMAP" id="MF_01320_B">
    <property type="entry name" value="Ribosomal_uL2_B"/>
    <property type="match status" value="1"/>
</dbReference>
<dbReference type="InterPro" id="IPR012340">
    <property type="entry name" value="NA-bd_OB-fold"/>
</dbReference>
<dbReference type="InterPro" id="IPR014722">
    <property type="entry name" value="Rib_uL2_dom2"/>
</dbReference>
<dbReference type="InterPro" id="IPR002171">
    <property type="entry name" value="Ribosomal_uL2"/>
</dbReference>
<dbReference type="InterPro" id="IPR005880">
    <property type="entry name" value="Ribosomal_uL2_bac/org-type"/>
</dbReference>
<dbReference type="InterPro" id="IPR022669">
    <property type="entry name" value="Ribosomal_uL2_C"/>
</dbReference>
<dbReference type="InterPro" id="IPR022671">
    <property type="entry name" value="Ribosomal_uL2_CS"/>
</dbReference>
<dbReference type="InterPro" id="IPR014726">
    <property type="entry name" value="Ribosomal_uL2_dom3"/>
</dbReference>
<dbReference type="InterPro" id="IPR022666">
    <property type="entry name" value="Ribosomal_uL2_RNA-bd_dom"/>
</dbReference>
<dbReference type="InterPro" id="IPR008991">
    <property type="entry name" value="Translation_prot_SH3-like_sf"/>
</dbReference>
<dbReference type="NCBIfam" id="TIGR01171">
    <property type="entry name" value="rplB_bact"/>
    <property type="match status" value="1"/>
</dbReference>
<dbReference type="PANTHER" id="PTHR13691:SF5">
    <property type="entry name" value="LARGE RIBOSOMAL SUBUNIT PROTEIN UL2M"/>
    <property type="match status" value="1"/>
</dbReference>
<dbReference type="PANTHER" id="PTHR13691">
    <property type="entry name" value="RIBOSOMAL PROTEIN L2"/>
    <property type="match status" value="1"/>
</dbReference>
<dbReference type="Pfam" id="PF00181">
    <property type="entry name" value="Ribosomal_L2"/>
    <property type="match status" value="1"/>
</dbReference>
<dbReference type="Pfam" id="PF03947">
    <property type="entry name" value="Ribosomal_L2_C"/>
    <property type="match status" value="1"/>
</dbReference>
<dbReference type="PIRSF" id="PIRSF002158">
    <property type="entry name" value="Ribosomal_L2"/>
    <property type="match status" value="1"/>
</dbReference>
<dbReference type="SMART" id="SM01383">
    <property type="entry name" value="Ribosomal_L2"/>
    <property type="match status" value="1"/>
</dbReference>
<dbReference type="SMART" id="SM01382">
    <property type="entry name" value="Ribosomal_L2_C"/>
    <property type="match status" value="1"/>
</dbReference>
<dbReference type="SUPFAM" id="SSF50249">
    <property type="entry name" value="Nucleic acid-binding proteins"/>
    <property type="match status" value="1"/>
</dbReference>
<dbReference type="SUPFAM" id="SSF50104">
    <property type="entry name" value="Translation proteins SH3-like domain"/>
    <property type="match status" value="1"/>
</dbReference>
<dbReference type="PROSITE" id="PS00467">
    <property type="entry name" value="RIBOSOMAL_L2"/>
    <property type="match status" value="1"/>
</dbReference>
<keyword id="KW-0687">Ribonucleoprotein</keyword>
<keyword id="KW-0689">Ribosomal protein</keyword>
<keyword id="KW-0694">RNA-binding</keyword>
<keyword id="KW-0699">rRNA-binding</keyword>
<proteinExistence type="inferred from homology"/>
<protein>
    <recommendedName>
        <fullName evidence="1">Large ribosomal subunit protein uL2</fullName>
    </recommendedName>
    <alternativeName>
        <fullName evidence="3">50S ribosomal protein L2</fullName>
    </alternativeName>
</protein>
<name>RL2_CLOBM</name>
<accession>B1KSM2</accession>
<reference key="1">
    <citation type="journal article" date="2007" name="PLoS ONE">
        <title>Analysis of the neurotoxin complex genes in Clostridium botulinum A1-A4 and B1 strains: BoNT/A3, /Ba4 and /B1 clusters are located within plasmids.</title>
        <authorList>
            <person name="Smith T.J."/>
            <person name="Hill K.K."/>
            <person name="Foley B.T."/>
            <person name="Detter J.C."/>
            <person name="Munk A.C."/>
            <person name="Bruce D.C."/>
            <person name="Doggett N.A."/>
            <person name="Smith L.A."/>
            <person name="Marks J.D."/>
            <person name="Xie G."/>
            <person name="Brettin T.S."/>
        </authorList>
    </citation>
    <scope>NUCLEOTIDE SEQUENCE [LARGE SCALE GENOMIC DNA]</scope>
    <source>
        <strain>Loch Maree / Type A3</strain>
    </source>
</reference>
<evidence type="ECO:0000255" key="1">
    <source>
        <dbReference type="HAMAP-Rule" id="MF_01320"/>
    </source>
</evidence>
<evidence type="ECO:0000256" key="2">
    <source>
        <dbReference type="SAM" id="MobiDB-lite"/>
    </source>
</evidence>
<evidence type="ECO:0000305" key="3"/>
<comment type="function">
    <text evidence="1">One of the primary rRNA binding proteins. Required for association of the 30S and 50S subunits to form the 70S ribosome, for tRNA binding and peptide bond formation. It has been suggested to have peptidyltransferase activity; this is somewhat controversial. Makes several contacts with the 16S rRNA in the 70S ribosome.</text>
</comment>
<comment type="subunit">
    <text evidence="1">Part of the 50S ribosomal subunit. Forms a bridge to the 30S subunit in the 70S ribosome.</text>
</comment>
<comment type="similarity">
    <text evidence="1">Belongs to the universal ribosomal protein uL2 family.</text>
</comment>
<gene>
    <name evidence="1" type="primary">rplB</name>
    <name type="ordered locus">CLK_2921</name>
</gene>
<feature type="chain" id="PRO_1000141530" description="Large ribosomal subunit protein uL2">
    <location>
        <begin position="1"/>
        <end position="277"/>
    </location>
</feature>
<feature type="region of interest" description="Disordered" evidence="2">
    <location>
        <begin position="219"/>
        <end position="277"/>
    </location>
</feature>
<sequence>MAVKGFRPTTPTRREMTMCTFEEITTSTPEKSLLVSLKKSGGRNANGKITVRHIGGGAKRKYRIIDFKRNKDNIPAKVVSIEYDPNRTAFIALVVYADGEKRYIIAPVGLKVGDTVVSGPESDIKVGNCLPIRNIPVGTVIHNIELAAGKGAQLVRSAGNSAQLMAKEGDYSQVRLPSGEVRYIRVECRATIGVVSNQTSEIVNIGKAGRKRHMGVRPTVRGSVMNPNDHPHGGGEGRSPIGHPSPRTPWGKPALGYKTRKNKKYSDRFIVKRRHDK</sequence>
<organism>
    <name type="scientific">Clostridium botulinum (strain Loch Maree / Type A3)</name>
    <dbReference type="NCBI Taxonomy" id="498214"/>
    <lineage>
        <taxon>Bacteria</taxon>
        <taxon>Bacillati</taxon>
        <taxon>Bacillota</taxon>
        <taxon>Clostridia</taxon>
        <taxon>Eubacteriales</taxon>
        <taxon>Clostridiaceae</taxon>
        <taxon>Clostridium</taxon>
    </lineage>
</organism>